<sequence>MRSLALLCAVLALSDGITRLPLERGKKLREILREKGLLHHFLQHHRYDIGTKFPHAFPDVLTVVTEPLLNTLDMEYYGTISIGTPPQDFTVVFDTGSSNLWVPSVSCTSPACQSHQMFNPSQSSTYKSTGQNLSIHYGTGDMEGTVGCDTVTVASLMDTNQLFGLSTSEPGQFFVYVKFDGILGLGYPSLAADGITPVFDNMVNESLLEQNLFSVYLSREPMGSMVVFGGIDESYFTGSINWIPVSYQGYWQISMDSIIVNKQEIACSSGCQAIIDTGTSLVAGPASDINDIQSAVGANQNTYGEYSVNCSHILAMPDVVFVIGGIQYPVPALAYTEQNGQGTCMSSFQNSSADLWILGDVFIRVYYSIFDRANNRVGLAKAI</sequence>
<organism>
    <name type="scientific">Gallus gallus</name>
    <name type="common">Chicken</name>
    <dbReference type="NCBI Taxonomy" id="9031"/>
    <lineage>
        <taxon>Eukaryota</taxon>
        <taxon>Metazoa</taxon>
        <taxon>Chordata</taxon>
        <taxon>Craniata</taxon>
        <taxon>Vertebrata</taxon>
        <taxon>Euteleostomi</taxon>
        <taxon>Archelosauria</taxon>
        <taxon>Archosauria</taxon>
        <taxon>Dinosauria</taxon>
        <taxon>Saurischia</taxon>
        <taxon>Theropoda</taxon>
        <taxon>Coelurosauria</taxon>
        <taxon>Aves</taxon>
        <taxon>Neognathae</taxon>
        <taxon>Galloanserae</taxon>
        <taxon>Galliformes</taxon>
        <taxon>Phasianidae</taxon>
        <taxon>Phasianinae</taxon>
        <taxon>Gallus</taxon>
    </lineage>
</organism>
<protein>
    <recommendedName>
        <fullName>Embryonic pepsinogen</fullName>
        <ecNumber>3.4.23.-</ecNumber>
    </recommendedName>
</protein>
<evidence type="ECO:0000250" key="1"/>
<evidence type="ECO:0000255" key="2"/>
<evidence type="ECO:0000255" key="3">
    <source>
        <dbReference type="PROSITE-ProRule" id="PRU01103"/>
    </source>
</evidence>
<evidence type="ECO:0000255" key="4">
    <source>
        <dbReference type="PROSITE-ProRule" id="PRU10094"/>
    </source>
</evidence>
<evidence type="ECO:0000305" key="5"/>
<dbReference type="EC" id="3.4.23.-"/>
<dbReference type="EMBL" id="D00215">
    <property type="protein sequence ID" value="BAA00153.1"/>
    <property type="molecule type" value="mRNA"/>
</dbReference>
<dbReference type="PIR" id="A41443">
    <property type="entry name" value="A41443"/>
</dbReference>
<dbReference type="RefSeq" id="NP_990385.1">
    <property type="nucleotide sequence ID" value="NM_205054.2"/>
</dbReference>
<dbReference type="SMR" id="P16476"/>
<dbReference type="STRING" id="9031.ENSGALP00000000593"/>
<dbReference type="MEROPS" id="A01.028"/>
<dbReference type="GlyGen" id="P16476">
    <property type="glycosylation" value="4 sites"/>
</dbReference>
<dbReference type="PaxDb" id="9031-ENSGALP00000000593"/>
<dbReference type="Ensembl" id="ENSGALT00010066315.1">
    <property type="protein sequence ID" value="ENSGALP00010040581.1"/>
    <property type="gene ID" value="ENSGALG00010027352.1"/>
</dbReference>
<dbReference type="GeneID" id="395926"/>
<dbReference type="KEGG" id="gga:395926"/>
<dbReference type="CTD" id="643834"/>
<dbReference type="VEuPathDB" id="HostDB:geneid_395926"/>
<dbReference type="eggNOG" id="KOG1339">
    <property type="taxonomic scope" value="Eukaryota"/>
</dbReference>
<dbReference type="GeneTree" id="ENSGT00940000162710"/>
<dbReference type="InParanoid" id="P16476"/>
<dbReference type="OMA" id="HHYDIST"/>
<dbReference type="OrthoDB" id="771136at2759"/>
<dbReference type="PhylomeDB" id="P16476"/>
<dbReference type="PRO" id="PR:P16476"/>
<dbReference type="Proteomes" id="UP000000539">
    <property type="component" value="Chromosome 26"/>
</dbReference>
<dbReference type="GO" id="GO:0004190">
    <property type="term" value="F:aspartic-type endopeptidase activity"/>
    <property type="evidence" value="ECO:0000318"/>
    <property type="project" value="GO_Central"/>
</dbReference>
<dbReference type="GO" id="GO:0007586">
    <property type="term" value="P:digestion"/>
    <property type="evidence" value="ECO:0007669"/>
    <property type="project" value="UniProtKB-KW"/>
</dbReference>
<dbReference type="GO" id="GO:0006508">
    <property type="term" value="P:proteolysis"/>
    <property type="evidence" value="ECO:0000318"/>
    <property type="project" value="GO_Central"/>
</dbReference>
<dbReference type="CDD" id="cd05478">
    <property type="entry name" value="pepsin_A"/>
    <property type="match status" value="1"/>
</dbReference>
<dbReference type="FunFam" id="2.40.70.10:FF:000006">
    <property type="entry name" value="Cathepsin E"/>
    <property type="match status" value="1"/>
</dbReference>
<dbReference type="FunFam" id="2.40.70.10:FF:000004">
    <property type="entry name" value="Pepsin A"/>
    <property type="match status" value="1"/>
</dbReference>
<dbReference type="Gene3D" id="6.10.140.60">
    <property type="match status" value="1"/>
</dbReference>
<dbReference type="Gene3D" id="2.40.70.10">
    <property type="entry name" value="Acid Proteases"/>
    <property type="match status" value="2"/>
</dbReference>
<dbReference type="InterPro" id="IPR001461">
    <property type="entry name" value="Aspartic_peptidase_A1"/>
</dbReference>
<dbReference type="InterPro" id="IPR001969">
    <property type="entry name" value="Aspartic_peptidase_AS"/>
</dbReference>
<dbReference type="InterPro" id="IPR012848">
    <property type="entry name" value="Aspartic_peptidase_N"/>
</dbReference>
<dbReference type="InterPro" id="IPR034162">
    <property type="entry name" value="Pepsin_A"/>
</dbReference>
<dbReference type="InterPro" id="IPR033121">
    <property type="entry name" value="PEPTIDASE_A1"/>
</dbReference>
<dbReference type="InterPro" id="IPR021109">
    <property type="entry name" value="Peptidase_aspartic_dom_sf"/>
</dbReference>
<dbReference type="PANTHER" id="PTHR47966">
    <property type="entry name" value="BETA-SITE APP-CLEAVING ENZYME, ISOFORM A-RELATED"/>
    <property type="match status" value="1"/>
</dbReference>
<dbReference type="PANTHER" id="PTHR47966:SF13">
    <property type="entry name" value="CHYMOSIN"/>
    <property type="match status" value="1"/>
</dbReference>
<dbReference type="Pfam" id="PF07966">
    <property type="entry name" value="A1_Propeptide"/>
    <property type="match status" value="1"/>
</dbReference>
<dbReference type="Pfam" id="PF00026">
    <property type="entry name" value="Asp"/>
    <property type="match status" value="1"/>
</dbReference>
<dbReference type="PRINTS" id="PR00792">
    <property type="entry name" value="PEPSIN"/>
</dbReference>
<dbReference type="SUPFAM" id="SSF50630">
    <property type="entry name" value="Acid proteases"/>
    <property type="match status" value="1"/>
</dbReference>
<dbReference type="PROSITE" id="PS00141">
    <property type="entry name" value="ASP_PROTEASE"/>
    <property type="match status" value="2"/>
</dbReference>
<dbReference type="PROSITE" id="PS51767">
    <property type="entry name" value="PEPTIDASE_A1"/>
    <property type="match status" value="1"/>
</dbReference>
<keyword id="KW-0064">Aspartyl protease</keyword>
<keyword id="KW-0222">Digestion</keyword>
<keyword id="KW-1015">Disulfide bond</keyword>
<keyword id="KW-0325">Glycoprotein</keyword>
<keyword id="KW-0378">Hydrolase</keyword>
<keyword id="KW-0645">Protease</keyword>
<keyword id="KW-1185">Reference proteome</keyword>
<keyword id="KW-0732">Signal</keyword>
<name>PEPE_CHICK</name>
<reference key="1">
    <citation type="journal article" date="1988" name="J. Biochem.">
        <title>Molecular cloning and the nucleotide sequence of cDNA for embryonic chicken pepsinogen: phylogenetic relationship with prochymosin.</title>
        <authorList>
            <person name="Hayashi K."/>
            <person name="Agata K."/>
            <person name="Mochii M."/>
            <person name="Yasugi S."/>
            <person name="Eguchi G."/>
            <person name="Mizuno T."/>
        </authorList>
    </citation>
    <scope>NUCLEOTIDE SEQUENCE [MRNA]</scope>
</reference>
<accession>P16476</accession>
<comment type="developmental stage">
    <text>Specifically secreted during the embryonic period in the chicken proventriculus (glandular stomach).</text>
</comment>
<comment type="similarity">
    <text evidence="5">Belongs to the peptidase A1 family.</text>
</comment>
<proteinExistence type="evidence at transcript level"/>
<feature type="signal peptide" evidence="2">
    <location>
        <begin position="1"/>
        <end position="16"/>
    </location>
</feature>
<feature type="chain" id="PRO_0000026000" description="Embryonic pepsinogen">
    <location>
        <begin position="17"/>
        <end position="383"/>
    </location>
</feature>
<feature type="domain" description="Peptidase A1" evidence="3">
    <location>
        <begin position="76"/>
        <end position="380"/>
    </location>
</feature>
<feature type="active site" evidence="4">
    <location>
        <position position="94"/>
    </location>
</feature>
<feature type="active site" evidence="4">
    <location>
        <position position="276"/>
    </location>
</feature>
<feature type="glycosylation site" description="N-linked (GlcNAc...) asparagine" evidence="2">
    <location>
        <position position="132"/>
    </location>
</feature>
<feature type="glycosylation site" description="N-linked (GlcNAc...) asparagine" evidence="2">
    <location>
        <position position="204"/>
    </location>
</feature>
<feature type="glycosylation site" description="N-linked (GlcNAc...) asparagine" evidence="2">
    <location>
        <position position="309"/>
    </location>
</feature>
<feature type="glycosylation site" description="N-linked (GlcNAc...) asparagine" evidence="2">
    <location>
        <position position="350"/>
    </location>
</feature>
<feature type="disulfide bond" evidence="1">
    <location>
        <begin position="107"/>
        <end position="112"/>
    </location>
</feature>
<feature type="disulfide bond" evidence="1">
    <location>
        <begin position="267"/>
        <end position="271"/>
    </location>
</feature>
<feature type="disulfide bond" evidence="1">
    <location>
        <begin position="310"/>
        <end position="344"/>
    </location>
</feature>
<feature type="sequence variant">
    <original>T</original>
    <variation>S</variation>
    <location>
        <position position="51"/>
    </location>
</feature>